<sequence>MSVNRILVINPGSTSTKIGVFDNERPVLEETIRHDVEQIGKYKRIIDQYEFRKETILEVLHSHGINISKLNAVCGRGGLLRPIEGGTYTVNDAMLEDLKNGFSGHHASNLGGILAYEIASGLNIPAFIVDPVVVDEMEPVARISGIAGMERKSIFHALNQKAVARKVAEQLNHKYEDLNLLVTHMGGGITVGAHKKGRVVDVNNGLNGEGPFSPERAGTVPVGQLVEMCFSGEYYRDEMIKKLVGQGGLVSLIGTNDAIKVEKMVEKGDPEATLIYKAMAYQVAKEIGGASAVLHGKIDAIVLTGGLAYSKILVDEIKERVDWIADVIVHPGEDELEALAEGALRVLREEEAPKEYVVREKETVARG</sequence>
<gene>
    <name evidence="1" type="primary">buk</name>
    <name type="ordered locus">BCG9842_B0960</name>
</gene>
<evidence type="ECO:0000255" key="1">
    <source>
        <dbReference type="HAMAP-Rule" id="MF_00542"/>
    </source>
</evidence>
<comment type="catalytic activity">
    <reaction evidence="1">
        <text>butanoate + ATP = butanoyl phosphate + ADP</text>
        <dbReference type="Rhea" id="RHEA:13585"/>
        <dbReference type="ChEBI" id="CHEBI:17968"/>
        <dbReference type="ChEBI" id="CHEBI:30616"/>
        <dbReference type="ChEBI" id="CHEBI:58079"/>
        <dbReference type="ChEBI" id="CHEBI:456216"/>
        <dbReference type="EC" id="2.7.2.7"/>
    </reaction>
</comment>
<comment type="subcellular location">
    <subcellularLocation>
        <location evidence="1">Cytoplasm</location>
    </subcellularLocation>
</comment>
<comment type="similarity">
    <text evidence="1">Belongs to the acetokinase family.</text>
</comment>
<dbReference type="EC" id="2.7.2.7" evidence="1"/>
<dbReference type="EMBL" id="CP001186">
    <property type="protein sequence ID" value="ACK98387.1"/>
    <property type="molecule type" value="Genomic_DNA"/>
</dbReference>
<dbReference type="RefSeq" id="WP_000115782.1">
    <property type="nucleotide sequence ID" value="NC_011772.1"/>
</dbReference>
<dbReference type="SMR" id="B7IXF5"/>
<dbReference type="KEGG" id="bcg:BCG9842_B0960"/>
<dbReference type="HOGENOM" id="CLU_048716_0_0_9"/>
<dbReference type="Proteomes" id="UP000006744">
    <property type="component" value="Chromosome"/>
</dbReference>
<dbReference type="GO" id="GO:0005737">
    <property type="term" value="C:cytoplasm"/>
    <property type="evidence" value="ECO:0007669"/>
    <property type="project" value="UniProtKB-SubCell"/>
</dbReference>
<dbReference type="GO" id="GO:0008776">
    <property type="term" value="F:acetate kinase activity"/>
    <property type="evidence" value="ECO:0007669"/>
    <property type="project" value="TreeGrafter"/>
</dbReference>
<dbReference type="GO" id="GO:0005524">
    <property type="term" value="F:ATP binding"/>
    <property type="evidence" value="ECO:0007669"/>
    <property type="project" value="UniProtKB-KW"/>
</dbReference>
<dbReference type="GO" id="GO:0047761">
    <property type="term" value="F:butyrate kinase activity"/>
    <property type="evidence" value="ECO:0007669"/>
    <property type="project" value="UniProtKB-UniRule"/>
</dbReference>
<dbReference type="GO" id="GO:0006083">
    <property type="term" value="P:acetate metabolic process"/>
    <property type="evidence" value="ECO:0007669"/>
    <property type="project" value="TreeGrafter"/>
</dbReference>
<dbReference type="CDD" id="cd24011">
    <property type="entry name" value="ASKHA_NBD_BK"/>
    <property type="match status" value="1"/>
</dbReference>
<dbReference type="Gene3D" id="3.30.420.40">
    <property type="match status" value="2"/>
</dbReference>
<dbReference type="HAMAP" id="MF_00542">
    <property type="entry name" value="Butyrate_kinase"/>
    <property type="match status" value="1"/>
</dbReference>
<dbReference type="InterPro" id="IPR000890">
    <property type="entry name" value="Aliphatic_acid_kin_short-chain"/>
</dbReference>
<dbReference type="InterPro" id="IPR023865">
    <property type="entry name" value="Aliphatic_acid_kinase_CS"/>
</dbReference>
<dbReference type="InterPro" id="IPR043129">
    <property type="entry name" value="ATPase_NBD"/>
</dbReference>
<dbReference type="InterPro" id="IPR011245">
    <property type="entry name" value="Butyrate_kin"/>
</dbReference>
<dbReference type="NCBIfam" id="TIGR02707">
    <property type="entry name" value="butyr_kinase"/>
    <property type="match status" value="1"/>
</dbReference>
<dbReference type="NCBIfam" id="NF002834">
    <property type="entry name" value="PRK03011.1-5"/>
    <property type="match status" value="1"/>
</dbReference>
<dbReference type="PANTHER" id="PTHR21060">
    <property type="entry name" value="ACETATE KINASE"/>
    <property type="match status" value="1"/>
</dbReference>
<dbReference type="PANTHER" id="PTHR21060:SF3">
    <property type="entry name" value="BUTYRATE KINASE 2-RELATED"/>
    <property type="match status" value="1"/>
</dbReference>
<dbReference type="Pfam" id="PF00871">
    <property type="entry name" value="Acetate_kinase"/>
    <property type="match status" value="1"/>
</dbReference>
<dbReference type="PIRSF" id="PIRSF036458">
    <property type="entry name" value="Butyrate_kin"/>
    <property type="match status" value="1"/>
</dbReference>
<dbReference type="PRINTS" id="PR00471">
    <property type="entry name" value="ACETATEKNASE"/>
</dbReference>
<dbReference type="SUPFAM" id="SSF53067">
    <property type="entry name" value="Actin-like ATPase domain"/>
    <property type="match status" value="2"/>
</dbReference>
<dbReference type="PROSITE" id="PS01075">
    <property type="entry name" value="ACETATE_KINASE_1"/>
    <property type="match status" value="1"/>
</dbReference>
<dbReference type="PROSITE" id="PS01076">
    <property type="entry name" value="ACETATE_KINASE_2"/>
    <property type="match status" value="1"/>
</dbReference>
<name>BUK_BACC2</name>
<accession>B7IXF5</accession>
<proteinExistence type="inferred from homology"/>
<reference key="1">
    <citation type="submission" date="2008-10" db="EMBL/GenBank/DDBJ databases">
        <title>Genome sequence of Bacillus cereus G9842.</title>
        <authorList>
            <person name="Dodson R.J."/>
            <person name="Durkin A.S."/>
            <person name="Rosovitz M.J."/>
            <person name="Rasko D.A."/>
            <person name="Hoffmaster A."/>
            <person name="Ravel J."/>
            <person name="Sutton G."/>
        </authorList>
    </citation>
    <scope>NUCLEOTIDE SEQUENCE [LARGE SCALE GENOMIC DNA]</scope>
    <source>
        <strain>G9842</strain>
    </source>
</reference>
<organism>
    <name type="scientific">Bacillus cereus (strain G9842)</name>
    <dbReference type="NCBI Taxonomy" id="405531"/>
    <lineage>
        <taxon>Bacteria</taxon>
        <taxon>Bacillati</taxon>
        <taxon>Bacillota</taxon>
        <taxon>Bacilli</taxon>
        <taxon>Bacillales</taxon>
        <taxon>Bacillaceae</taxon>
        <taxon>Bacillus</taxon>
        <taxon>Bacillus cereus group</taxon>
    </lineage>
</organism>
<protein>
    <recommendedName>
        <fullName evidence="1">Probable butyrate kinase</fullName>
        <shortName evidence="1">BK</shortName>
        <ecNumber evidence="1">2.7.2.7</ecNumber>
    </recommendedName>
    <alternativeName>
        <fullName evidence="1">Branched-chain carboxylic acid kinase</fullName>
    </alternativeName>
</protein>
<feature type="chain" id="PRO_1000128898" description="Probable butyrate kinase">
    <location>
        <begin position="1"/>
        <end position="367"/>
    </location>
</feature>
<keyword id="KW-0067">ATP-binding</keyword>
<keyword id="KW-0963">Cytoplasm</keyword>
<keyword id="KW-0418">Kinase</keyword>
<keyword id="KW-0547">Nucleotide-binding</keyword>
<keyword id="KW-0808">Transferase</keyword>